<organism>
    <name type="scientific">Nostoc punctiforme (strain ATCC 29133 / PCC 73102)</name>
    <dbReference type="NCBI Taxonomy" id="63737"/>
    <lineage>
        <taxon>Bacteria</taxon>
        <taxon>Bacillati</taxon>
        <taxon>Cyanobacteriota</taxon>
        <taxon>Cyanophyceae</taxon>
        <taxon>Nostocales</taxon>
        <taxon>Nostocaceae</taxon>
        <taxon>Nostoc</taxon>
    </lineage>
</organism>
<accession>B2J0D4</accession>
<name>RL33_NOSP7</name>
<reference key="1">
    <citation type="journal article" date="2013" name="Plant Physiol.">
        <title>A Nostoc punctiforme Sugar Transporter Necessary to Establish a Cyanobacterium-Plant Symbiosis.</title>
        <authorList>
            <person name="Ekman M."/>
            <person name="Picossi S."/>
            <person name="Campbell E.L."/>
            <person name="Meeks J.C."/>
            <person name="Flores E."/>
        </authorList>
    </citation>
    <scope>NUCLEOTIDE SEQUENCE [LARGE SCALE GENOMIC DNA]</scope>
    <source>
        <strain>ATCC 29133 / PCC 73102</strain>
    </source>
</reference>
<evidence type="ECO:0000255" key="1">
    <source>
        <dbReference type="HAMAP-Rule" id="MF_00294"/>
    </source>
</evidence>
<evidence type="ECO:0000305" key="2"/>
<keyword id="KW-1185">Reference proteome</keyword>
<keyword id="KW-0687">Ribonucleoprotein</keyword>
<keyword id="KW-0689">Ribosomal protein</keyword>
<feature type="chain" id="PRO_1000115143" description="Large ribosomal subunit protein bL33">
    <location>
        <begin position="1"/>
        <end position="64"/>
    </location>
</feature>
<comment type="similarity">
    <text evidence="1">Belongs to the bacterial ribosomal protein bL33 family.</text>
</comment>
<proteinExistence type="inferred from homology"/>
<dbReference type="EMBL" id="CP001037">
    <property type="protein sequence ID" value="ACC83286.1"/>
    <property type="molecule type" value="Genomic_DNA"/>
</dbReference>
<dbReference type="STRING" id="63737.Npun_R4941"/>
<dbReference type="EnsemblBacteria" id="ACC83286">
    <property type="protein sequence ID" value="ACC83286"/>
    <property type="gene ID" value="Npun_R4941"/>
</dbReference>
<dbReference type="KEGG" id="npu:Npun_R4941"/>
<dbReference type="eggNOG" id="COG0267">
    <property type="taxonomic scope" value="Bacteria"/>
</dbReference>
<dbReference type="HOGENOM" id="CLU_190949_3_0_3"/>
<dbReference type="OrthoDB" id="9801333at2"/>
<dbReference type="PhylomeDB" id="B2J0D4"/>
<dbReference type="Proteomes" id="UP000001191">
    <property type="component" value="Chromosome"/>
</dbReference>
<dbReference type="GO" id="GO:0005737">
    <property type="term" value="C:cytoplasm"/>
    <property type="evidence" value="ECO:0007669"/>
    <property type="project" value="UniProtKB-ARBA"/>
</dbReference>
<dbReference type="GO" id="GO:1990904">
    <property type="term" value="C:ribonucleoprotein complex"/>
    <property type="evidence" value="ECO:0007669"/>
    <property type="project" value="UniProtKB-KW"/>
</dbReference>
<dbReference type="GO" id="GO:0005840">
    <property type="term" value="C:ribosome"/>
    <property type="evidence" value="ECO:0007669"/>
    <property type="project" value="UniProtKB-KW"/>
</dbReference>
<dbReference type="GO" id="GO:0003735">
    <property type="term" value="F:structural constituent of ribosome"/>
    <property type="evidence" value="ECO:0007669"/>
    <property type="project" value="InterPro"/>
</dbReference>
<dbReference type="GO" id="GO:0006412">
    <property type="term" value="P:translation"/>
    <property type="evidence" value="ECO:0007669"/>
    <property type="project" value="UniProtKB-UniRule"/>
</dbReference>
<dbReference type="Gene3D" id="2.20.28.120">
    <property type="entry name" value="Ribosomal protein L33"/>
    <property type="match status" value="1"/>
</dbReference>
<dbReference type="HAMAP" id="MF_00294">
    <property type="entry name" value="Ribosomal_bL33"/>
    <property type="match status" value="1"/>
</dbReference>
<dbReference type="InterPro" id="IPR001705">
    <property type="entry name" value="Ribosomal_bL33"/>
</dbReference>
<dbReference type="InterPro" id="IPR018264">
    <property type="entry name" value="Ribosomal_bL33_CS"/>
</dbReference>
<dbReference type="InterPro" id="IPR038584">
    <property type="entry name" value="Ribosomal_bL33_sf"/>
</dbReference>
<dbReference type="InterPro" id="IPR011332">
    <property type="entry name" value="Ribosomal_zn-bd"/>
</dbReference>
<dbReference type="NCBIfam" id="NF001764">
    <property type="entry name" value="PRK00504.1"/>
    <property type="match status" value="1"/>
</dbReference>
<dbReference type="NCBIfam" id="NF001860">
    <property type="entry name" value="PRK00595.1"/>
    <property type="match status" value="1"/>
</dbReference>
<dbReference type="NCBIfam" id="TIGR01023">
    <property type="entry name" value="rpmG_bact"/>
    <property type="match status" value="1"/>
</dbReference>
<dbReference type="PANTHER" id="PTHR43168">
    <property type="entry name" value="50S RIBOSOMAL PROTEIN L33, CHLOROPLASTIC"/>
    <property type="match status" value="1"/>
</dbReference>
<dbReference type="PANTHER" id="PTHR43168:SF2">
    <property type="entry name" value="LARGE RIBOSOMAL SUBUNIT PROTEIN BL33C"/>
    <property type="match status" value="1"/>
</dbReference>
<dbReference type="Pfam" id="PF00471">
    <property type="entry name" value="Ribosomal_L33"/>
    <property type="match status" value="1"/>
</dbReference>
<dbReference type="SUPFAM" id="SSF57829">
    <property type="entry name" value="Zn-binding ribosomal proteins"/>
    <property type="match status" value="1"/>
</dbReference>
<dbReference type="PROSITE" id="PS00582">
    <property type="entry name" value="RIBOSOMAL_L33"/>
    <property type="match status" value="1"/>
</dbReference>
<gene>
    <name evidence="1" type="primary">rpmG</name>
    <name evidence="1" type="synonym">rpl33</name>
    <name type="ordered locus">Npun_R4941</name>
</gene>
<sequence>MAKSKGARIIITLECTECRTNSDKRSAGVSRYTSTKNRRNTTNRLELKKFCTHCNKHTVHKEIK</sequence>
<protein>
    <recommendedName>
        <fullName evidence="1">Large ribosomal subunit protein bL33</fullName>
    </recommendedName>
    <alternativeName>
        <fullName evidence="2">50S ribosomal protein L33</fullName>
    </alternativeName>
</protein>